<comment type="function">
    <text evidence="1">DNA repair enzyme involved in the repair of deaminated bases. Selectively cleaves double-stranded DNA at the second phosphodiester bond 3' to a deoxyinosine leaving behind the intact lesion on the nicked DNA.</text>
</comment>
<comment type="catalytic activity">
    <reaction evidence="1">
        <text>Endonucleolytic cleavage at apurinic or apyrimidinic sites to products with a 5'-phosphate.</text>
        <dbReference type="EC" id="3.1.21.7"/>
    </reaction>
</comment>
<comment type="cofactor">
    <cofactor evidence="1">
        <name>Mg(2+)</name>
        <dbReference type="ChEBI" id="CHEBI:18420"/>
    </cofactor>
</comment>
<comment type="subcellular location">
    <subcellularLocation>
        <location evidence="1">Cytoplasm</location>
    </subcellularLocation>
</comment>
<comment type="similarity">
    <text evidence="1">Belongs to the endonuclease V family.</text>
</comment>
<accession>Q5PKA2</accession>
<organism>
    <name type="scientific">Salmonella paratyphi A (strain ATCC 9150 / SARB42)</name>
    <dbReference type="NCBI Taxonomy" id="295319"/>
    <lineage>
        <taxon>Bacteria</taxon>
        <taxon>Pseudomonadati</taxon>
        <taxon>Pseudomonadota</taxon>
        <taxon>Gammaproteobacteria</taxon>
        <taxon>Enterobacterales</taxon>
        <taxon>Enterobacteriaceae</taxon>
        <taxon>Salmonella</taxon>
    </lineage>
</organism>
<feature type="chain" id="PRO_0000159668" description="Endonuclease V">
    <location>
        <begin position="1"/>
        <end position="223"/>
    </location>
</feature>
<feature type="binding site" evidence="1">
    <location>
        <position position="35"/>
    </location>
    <ligand>
        <name>Mg(2+)</name>
        <dbReference type="ChEBI" id="CHEBI:18420"/>
    </ligand>
</feature>
<feature type="binding site" evidence="1">
    <location>
        <position position="103"/>
    </location>
    <ligand>
        <name>Mg(2+)</name>
        <dbReference type="ChEBI" id="CHEBI:18420"/>
    </ligand>
</feature>
<feature type="site" description="Interaction with target DNA" evidence="1">
    <location>
        <position position="73"/>
    </location>
</feature>
<name>NFI_SALPA</name>
<gene>
    <name evidence="1" type="primary">nfi</name>
    <name type="ordered locus">SPA4005</name>
</gene>
<reference key="1">
    <citation type="journal article" date="2004" name="Nat. Genet.">
        <title>Comparison of genome degradation in Paratyphi A and Typhi, human-restricted serovars of Salmonella enterica that cause typhoid.</title>
        <authorList>
            <person name="McClelland M."/>
            <person name="Sanderson K.E."/>
            <person name="Clifton S.W."/>
            <person name="Latreille P."/>
            <person name="Porwollik S."/>
            <person name="Sabo A."/>
            <person name="Meyer R."/>
            <person name="Bieri T."/>
            <person name="Ozersky P."/>
            <person name="McLellan M."/>
            <person name="Harkins C.R."/>
            <person name="Wang C."/>
            <person name="Nguyen C."/>
            <person name="Berghoff A."/>
            <person name="Elliott G."/>
            <person name="Kohlberg S."/>
            <person name="Strong C."/>
            <person name="Du F."/>
            <person name="Carter J."/>
            <person name="Kremizki C."/>
            <person name="Layman D."/>
            <person name="Leonard S."/>
            <person name="Sun H."/>
            <person name="Fulton L."/>
            <person name="Nash W."/>
            <person name="Miner T."/>
            <person name="Minx P."/>
            <person name="Delehaunty K."/>
            <person name="Fronick C."/>
            <person name="Magrini V."/>
            <person name="Nhan M."/>
            <person name="Warren W."/>
            <person name="Florea L."/>
            <person name="Spieth J."/>
            <person name="Wilson R.K."/>
        </authorList>
    </citation>
    <scope>NUCLEOTIDE SEQUENCE [LARGE SCALE GENOMIC DNA]</scope>
    <source>
        <strain>ATCC 9150 / SARB42</strain>
    </source>
</reference>
<proteinExistence type="inferred from homology"/>
<keyword id="KW-0963">Cytoplasm</keyword>
<keyword id="KW-0227">DNA damage</keyword>
<keyword id="KW-0234">DNA repair</keyword>
<keyword id="KW-0255">Endonuclease</keyword>
<keyword id="KW-0378">Hydrolase</keyword>
<keyword id="KW-0460">Magnesium</keyword>
<keyword id="KW-0479">Metal-binding</keyword>
<keyword id="KW-0540">Nuclease</keyword>
<dbReference type="EC" id="3.1.21.7" evidence="1"/>
<dbReference type="EMBL" id="CP000026">
    <property type="protein sequence ID" value="AAV79757.1"/>
    <property type="molecule type" value="Genomic_DNA"/>
</dbReference>
<dbReference type="RefSeq" id="WP_000362369.1">
    <property type="nucleotide sequence ID" value="NC_006511.1"/>
</dbReference>
<dbReference type="SMR" id="Q5PKA2"/>
<dbReference type="KEGG" id="spt:SPA4005"/>
<dbReference type="HOGENOM" id="CLU_047631_1_0_6"/>
<dbReference type="Proteomes" id="UP000008185">
    <property type="component" value="Chromosome"/>
</dbReference>
<dbReference type="GO" id="GO:0005737">
    <property type="term" value="C:cytoplasm"/>
    <property type="evidence" value="ECO:0007669"/>
    <property type="project" value="UniProtKB-SubCell"/>
</dbReference>
<dbReference type="GO" id="GO:0043737">
    <property type="term" value="F:deoxyribonuclease V activity"/>
    <property type="evidence" value="ECO:0007669"/>
    <property type="project" value="UniProtKB-UniRule"/>
</dbReference>
<dbReference type="GO" id="GO:0000287">
    <property type="term" value="F:magnesium ion binding"/>
    <property type="evidence" value="ECO:0007669"/>
    <property type="project" value="UniProtKB-UniRule"/>
</dbReference>
<dbReference type="GO" id="GO:0016891">
    <property type="term" value="F:RNA endonuclease activity, producing 5'-phosphomonoesters"/>
    <property type="evidence" value="ECO:0007669"/>
    <property type="project" value="TreeGrafter"/>
</dbReference>
<dbReference type="GO" id="GO:0003727">
    <property type="term" value="F:single-stranded RNA binding"/>
    <property type="evidence" value="ECO:0007669"/>
    <property type="project" value="TreeGrafter"/>
</dbReference>
<dbReference type="GO" id="GO:0006281">
    <property type="term" value="P:DNA repair"/>
    <property type="evidence" value="ECO:0007669"/>
    <property type="project" value="UniProtKB-UniRule"/>
</dbReference>
<dbReference type="CDD" id="cd06559">
    <property type="entry name" value="Endonuclease_V"/>
    <property type="match status" value="1"/>
</dbReference>
<dbReference type="FunFam" id="3.30.2170.10:FF:000001">
    <property type="entry name" value="Endonuclease V"/>
    <property type="match status" value="1"/>
</dbReference>
<dbReference type="Gene3D" id="3.30.2170.10">
    <property type="entry name" value="archaeoglobus fulgidus dsm 4304 superfamily"/>
    <property type="match status" value="1"/>
</dbReference>
<dbReference type="HAMAP" id="MF_00801">
    <property type="entry name" value="Endonuclease_5"/>
    <property type="match status" value="1"/>
</dbReference>
<dbReference type="InterPro" id="IPR007581">
    <property type="entry name" value="Endonuclease-V"/>
</dbReference>
<dbReference type="NCBIfam" id="NF008629">
    <property type="entry name" value="PRK11617.1"/>
    <property type="match status" value="1"/>
</dbReference>
<dbReference type="PANTHER" id="PTHR28511">
    <property type="entry name" value="ENDONUCLEASE V"/>
    <property type="match status" value="1"/>
</dbReference>
<dbReference type="PANTHER" id="PTHR28511:SF1">
    <property type="entry name" value="ENDONUCLEASE V"/>
    <property type="match status" value="1"/>
</dbReference>
<dbReference type="Pfam" id="PF04493">
    <property type="entry name" value="Endonuclease_5"/>
    <property type="match status" value="1"/>
</dbReference>
<evidence type="ECO:0000255" key="1">
    <source>
        <dbReference type="HAMAP-Rule" id="MF_00801"/>
    </source>
</evidence>
<protein>
    <recommendedName>
        <fullName evidence="1">Endonuclease V</fullName>
        <ecNumber evidence="1">3.1.21.7</ecNumber>
    </recommendedName>
    <alternativeName>
        <fullName evidence="1">Deoxyinosine 3'endonuclease</fullName>
    </alternativeName>
    <alternativeName>
        <fullName evidence="1">Deoxyribonuclease V</fullName>
        <shortName evidence="1">DNase V</shortName>
    </alternativeName>
</protein>
<sequence length="223" mass="24806">MDLASLRAQQIELASSVCREDRLDKDPPAFIGGADVGFEQGGEVTWAAMVLLKYPSLELVEYKVARIATTMPYIPGFLSFREYPALLAAWEQLSQKPDLLFVDGHGISHPRRLGVASHFGLLVDVPTIGVAKKRLCGKFEPLSTEPGALSPLMDKGEQLAWVWRSKARCNPLFIATGHRVSTDSALAWVQRCMKGYRLPEPTRWADAVASGRPAFVRWQEIQR</sequence>